<organism>
    <name type="scientific">Nitrosopumilus maritimus (strain SCM1)</name>
    <dbReference type="NCBI Taxonomy" id="436308"/>
    <lineage>
        <taxon>Archaea</taxon>
        <taxon>Nitrososphaerota</taxon>
        <taxon>Nitrososphaeria</taxon>
        <taxon>Nitrosopumilales</taxon>
        <taxon>Nitrosopumilaceae</taxon>
        <taxon>Nitrosopumilus</taxon>
    </lineage>
</organism>
<feature type="chain" id="PRO_0000350548" description="Ribosomal RNA large subunit methyltransferase N">
    <location>
        <begin position="1"/>
        <end position="351"/>
    </location>
</feature>
<feature type="domain" description="Radical SAM core" evidence="2">
    <location>
        <begin position="105"/>
        <end position="337"/>
    </location>
</feature>
<feature type="active site" description="Proton acceptor" evidence="1">
    <location>
        <position position="92"/>
    </location>
</feature>
<feature type="active site" description="S-methylcysteine intermediate" evidence="1">
    <location>
        <position position="342"/>
    </location>
</feature>
<feature type="binding site" evidence="1">
    <location>
        <position position="119"/>
    </location>
    <ligand>
        <name>[4Fe-4S] cluster</name>
        <dbReference type="ChEBI" id="CHEBI:49883"/>
        <note>4Fe-4S-S-AdoMet</note>
    </ligand>
</feature>
<feature type="binding site" evidence="1">
    <location>
        <position position="123"/>
    </location>
    <ligand>
        <name>[4Fe-4S] cluster</name>
        <dbReference type="ChEBI" id="CHEBI:49883"/>
        <note>4Fe-4S-S-AdoMet</note>
    </ligand>
</feature>
<feature type="binding site" evidence="1">
    <location>
        <position position="126"/>
    </location>
    <ligand>
        <name>[4Fe-4S] cluster</name>
        <dbReference type="ChEBI" id="CHEBI:49883"/>
        <note>4Fe-4S-S-AdoMet</note>
    </ligand>
</feature>
<feature type="binding site" evidence="1">
    <location>
        <begin position="169"/>
        <end position="170"/>
    </location>
    <ligand>
        <name>S-adenosyl-L-methionine</name>
        <dbReference type="ChEBI" id="CHEBI:59789"/>
    </ligand>
</feature>
<feature type="binding site" evidence="1">
    <location>
        <position position="201"/>
    </location>
    <ligand>
        <name>S-adenosyl-L-methionine</name>
        <dbReference type="ChEBI" id="CHEBI:59789"/>
    </ligand>
</feature>
<feature type="binding site" evidence="1">
    <location>
        <begin position="224"/>
        <end position="226"/>
    </location>
    <ligand>
        <name>S-adenosyl-L-methionine</name>
        <dbReference type="ChEBI" id="CHEBI:59789"/>
    </ligand>
</feature>
<feature type="binding site" evidence="1">
    <location>
        <position position="300"/>
    </location>
    <ligand>
        <name>S-adenosyl-L-methionine</name>
        <dbReference type="ChEBI" id="CHEBI:59789"/>
    </ligand>
</feature>
<feature type="disulfide bond" description="(transient)" evidence="1">
    <location>
        <begin position="112"/>
        <end position="342"/>
    </location>
</feature>
<gene>
    <name evidence="1" type="primary">rlmN</name>
    <name type="ordered locus">Nmar_1385</name>
</gene>
<keyword id="KW-0004">4Fe-4S</keyword>
<keyword id="KW-0963">Cytoplasm</keyword>
<keyword id="KW-1015">Disulfide bond</keyword>
<keyword id="KW-0408">Iron</keyword>
<keyword id="KW-0411">Iron-sulfur</keyword>
<keyword id="KW-0479">Metal-binding</keyword>
<keyword id="KW-0489">Methyltransferase</keyword>
<keyword id="KW-1185">Reference proteome</keyword>
<keyword id="KW-0698">rRNA processing</keyword>
<keyword id="KW-0949">S-adenosyl-L-methionine</keyword>
<keyword id="KW-0808">Transferase</keyword>
<evidence type="ECO:0000255" key="1">
    <source>
        <dbReference type="HAMAP-Rule" id="MF_01849"/>
    </source>
</evidence>
<evidence type="ECO:0000255" key="2">
    <source>
        <dbReference type="PROSITE-ProRule" id="PRU01266"/>
    </source>
</evidence>
<dbReference type="EC" id="2.1.1.-" evidence="1"/>
<dbReference type="EMBL" id="CP000866">
    <property type="protein sequence ID" value="ABX13281.1"/>
    <property type="molecule type" value="Genomic_DNA"/>
</dbReference>
<dbReference type="RefSeq" id="WP_012215768.1">
    <property type="nucleotide sequence ID" value="NC_010085.1"/>
</dbReference>
<dbReference type="SMR" id="A9A3L9"/>
<dbReference type="STRING" id="436308.Nmar_1385"/>
<dbReference type="EnsemblBacteria" id="ABX13281">
    <property type="protein sequence ID" value="ABX13281"/>
    <property type="gene ID" value="Nmar_1385"/>
</dbReference>
<dbReference type="GeneID" id="5774475"/>
<dbReference type="KEGG" id="nmr:Nmar_1385"/>
<dbReference type="eggNOG" id="arCOG00953">
    <property type="taxonomic scope" value="Archaea"/>
</dbReference>
<dbReference type="HOGENOM" id="CLU_029101_0_1_2"/>
<dbReference type="InParanoid" id="A9A3L9"/>
<dbReference type="OrthoDB" id="8245at2157"/>
<dbReference type="PhylomeDB" id="A9A3L9"/>
<dbReference type="Proteomes" id="UP000000792">
    <property type="component" value="Chromosome"/>
</dbReference>
<dbReference type="GO" id="GO:0005737">
    <property type="term" value="C:cytoplasm"/>
    <property type="evidence" value="ECO:0007669"/>
    <property type="project" value="UniProtKB-SubCell"/>
</dbReference>
<dbReference type="GO" id="GO:0051539">
    <property type="term" value="F:4 iron, 4 sulfur cluster binding"/>
    <property type="evidence" value="ECO:0007669"/>
    <property type="project" value="UniProtKB-UniRule"/>
</dbReference>
<dbReference type="GO" id="GO:0046872">
    <property type="term" value="F:metal ion binding"/>
    <property type="evidence" value="ECO:0007669"/>
    <property type="project" value="UniProtKB-KW"/>
</dbReference>
<dbReference type="GO" id="GO:0070040">
    <property type="term" value="F:rRNA (adenine(2503)-C2-)-methyltransferase activity"/>
    <property type="evidence" value="ECO:0007669"/>
    <property type="project" value="UniProtKB-UniRule"/>
</dbReference>
<dbReference type="GO" id="GO:0019843">
    <property type="term" value="F:rRNA binding"/>
    <property type="evidence" value="ECO:0007669"/>
    <property type="project" value="UniProtKB-UniRule"/>
</dbReference>
<dbReference type="GO" id="GO:0070475">
    <property type="term" value="P:rRNA base methylation"/>
    <property type="evidence" value="ECO:0000318"/>
    <property type="project" value="GO_Central"/>
</dbReference>
<dbReference type="GO" id="GO:0030488">
    <property type="term" value="P:tRNA methylation"/>
    <property type="evidence" value="ECO:0000318"/>
    <property type="project" value="GO_Central"/>
</dbReference>
<dbReference type="CDD" id="cd01335">
    <property type="entry name" value="Radical_SAM"/>
    <property type="match status" value="1"/>
</dbReference>
<dbReference type="FunFam" id="3.20.20.70:FF:000014">
    <property type="entry name" value="Probable dual-specificity RNA methyltransferase RlmN"/>
    <property type="match status" value="1"/>
</dbReference>
<dbReference type="Gene3D" id="1.10.150.530">
    <property type="match status" value="1"/>
</dbReference>
<dbReference type="Gene3D" id="3.20.20.70">
    <property type="entry name" value="Aldolase class I"/>
    <property type="match status" value="1"/>
</dbReference>
<dbReference type="HAMAP" id="MF_01849">
    <property type="entry name" value="RNA_methyltr_RlmN"/>
    <property type="match status" value="1"/>
</dbReference>
<dbReference type="InterPro" id="IPR013785">
    <property type="entry name" value="Aldolase_TIM"/>
</dbReference>
<dbReference type="InterPro" id="IPR040072">
    <property type="entry name" value="Methyltransferase_A"/>
</dbReference>
<dbReference type="InterPro" id="IPR027492">
    <property type="entry name" value="RNA_MTrfase_RlmN"/>
</dbReference>
<dbReference type="InterPro" id="IPR004383">
    <property type="entry name" value="rRNA_lsu_MTrfase_RlmN/Cfr"/>
</dbReference>
<dbReference type="InterPro" id="IPR007197">
    <property type="entry name" value="rSAM"/>
</dbReference>
<dbReference type="NCBIfam" id="TIGR00048">
    <property type="entry name" value="rRNA_mod_RlmN"/>
    <property type="match status" value="1"/>
</dbReference>
<dbReference type="PANTHER" id="PTHR30544">
    <property type="entry name" value="23S RRNA METHYLTRANSFERASE"/>
    <property type="match status" value="1"/>
</dbReference>
<dbReference type="PANTHER" id="PTHR30544:SF5">
    <property type="entry name" value="RADICAL SAM CORE DOMAIN-CONTAINING PROTEIN"/>
    <property type="match status" value="1"/>
</dbReference>
<dbReference type="Pfam" id="PF04055">
    <property type="entry name" value="Radical_SAM"/>
    <property type="match status" value="1"/>
</dbReference>
<dbReference type="PIRSF" id="PIRSF006004">
    <property type="entry name" value="CHP00048"/>
    <property type="match status" value="1"/>
</dbReference>
<dbReference type="SFLD" id="SFLDF00275">
    <property type="entry name" value="adenosine_C2_methyltransferase"/>
    <property type="match status" value="1"/>
</dbReference>
<dbReference type="SFLD" id="SFLDS00029">
    <property type="entry name" value="Radical_SAM"/>
    <property type="match status" value="1"/>
</dbReference>
<dbReference type="SUPFAM" id="SSF102114">
    <property type="entry name" value="Radical SAM enzymes"/>
    <property type="match status" value="1"/>
</dbReference>
<dbReference type="PROSITE" id="PS51918">
    <property type="entry name" value="RADICAL_SAM"/>
    <property type="match status" value="1"/>
</dbReference>
<protein>
    <recommendedName>
        <fullName evidence="1">Ribosomal RNA large subunit methyltransferase N</fullName>
        <ecNumber evidence="1">2.1.1.-</ecNumber>
    </recommendedName>
    <alternativeName>
        <fullName evidence="1">23S rRNA (adenine(2503)-C(2))-methyltransferase</fullName>
    </alternativeName>
    <alternativeName>
        <fullName evidence="1">23S rRNA m2A2503 methyltransferase</fullName>
    </alternativeName>
</protein>
<sequence length="351" mass="39021">MTDLYRLLPEEMEKLVIDMGYDRYRADQILLPLYYKFPKDINDIPQLPKKLREEFTEAGYTIGSAKEIHRVVSDDGDTTKLLLELSDGSSVETVLMQYEPTKIGGHPRSTICVSTQIGCAMGCVFCATGQMGFETNLKAEHIVSQVIHFAELLEQRGEHVTNLVFMGMGEPMANYDEMIRAVKILTHDRGFGLGQRHITISTIGITSGIEKLAEENLQIGLAISLHAPNNELRKKLVPTAGPNSVEDIIKSGRDYFKKTGRRVTFEYALMEGVNDSPEIAHELARLLRGNGSHVNIIPINPTAGDFKRPSEKNVLEFEQILRKSGVNCTVRVEKGTEISAACGQLRTDIVG</sequence>
<name>RLMN_NITMS</name>
<comment type="function">
    <text evidence="1">Specifically methylates position 2 of adenine 2503 in 23S rRNA.</text>
</comment>
<comment type="catalytic activity">
    <reaction evidence="1">
        <text>adenosine(2503) in 23S rRNA + 2 reduced [2Fe-2S]-[ferredoxin] + 2 S-adenosyl-L-methionine = 2-methyladenosine(2503) in 23S rRNA + 5'-deoxyadenosine + L-methionine + 2 oxidized [2Fe-2S]-[ferredoxin] + S-adenosyl-L-homocysteine</text>
        <dbReference type="Rhea" id="RHEA:42916"/>
        <dbReference type="Rhea" id="RHEA-COMP:10000"/>
        <dbReference type="Rhea" id="RHEA-COMP:10001"/>
        <dbReference type="Rhea" id="RHEA-COMP:10152"/>
        <dbReference type="Rhea" id="RHEA-COMP:10282"/>
        <dbReference type="ChEBI" id="CHEBI:17319"/>
        <dbReference type="ChEBI" id="CHEBI:33737"/>
        <dbReference type="ChEBI" id="CHEBI:33738"/>
        <dbReference type="ChEBI" id="CHEBI:57844"/>
        <dbReference type="ChEBI" id="CHEBI:57856"/>
        <dbReference type="ChEBI" id="CHEBI:59789"/>
        <dbReference type="ChEBI" id="CHEBI:74411"/>
        <dbReference type="ChEBI" id="CHEBI:74497"/>
    </reaction>
</comment>
<comment type="cofactor">
    <cofactor evidence="1">
        <name>[4Fe-4S] cluster</name>
        <dbReference type="ChEBI" id="CHEBI:49883"/>
    </cofactor>
    <text evidence="1">Binds 1 [4Fe-4S] cluster. The cluster is coordinated with 3 cysteines and an exchangeable S-adenosyl-L-methionine.</text>
</comment>
<comment type="subcellular location">
    <subcellularLocation>
        <location evidence="1">Cytoplasm</location>
    </subcellularLocation>
</comment>
<comment type="miscellaneous">
    <text evidence="1">Reaction proceeds by a ping-pong mechanism involving intermediate methylation of a conserved cysteine residue.</text>
</comment>
<comment type="similarity">
    <text evidence="1">Belongs to the radical SAM superfamily. RlmN family.</text>
</comment>
<accession>A9A3L9</accession>
<proteinExistence type="inferred from homology"/>
<reference key="1">
    <citation type="journal article" date="2010" name="Proc. Natl. Acad. Sci. U.S.A.">
        <title>Nitrosopumilus maritimus genome reveals unique mechanisms for nitrification and autotrophy in globally distributed marine crenarchaea.</title>
        <authorList>
            <person name="Walker C.B."/>
            <person name="de la Torre J.R."/>
            <person name="Klotz M.G."/>
            <person name="Urakawa H."/>
            <person name="Pinel N."/>
            <person name="Arp D.J."/>
            <person name="Brochier-Armanet C."/>
            <person name="Chain P.S."/>
            <person name="Chan P.P."/>
            <person name="Gollabgir A."/>
            <person name="Hemp J."/>
            <person name="Hugler M."/>
            <person name="Karr E.A."/>
            <person name="Konneke M."/>
            <person name="Shin M."/>
            <person name="Lawton T.J."/>
            <person name="Lowe T."/>
            <person name="Martens-Habbena W."/>
            <person name="Sayavedra-Soto L.A."/>
            <person name="Lang D."/>
            <person name="Sievert S.M."/>
            <person name="Rosenzweig A.C."/>
            <person name="Manning G."/>
            <person name="Stahl D.A."/>
        </authorList>
    </citation>
    <scope>NUCLEOTIDE SEQUENCE [LARGE SCALE GENOMIC DNA]</scope>
    <source>
        <strain>SCM1</strain>
    </source>
</reference>